<dbReference type="EC" id="7.1.2.2" evidence="1"/>
<dbReference type="EMBL" id="CP000243">
    <property type="protein sequence ID" value="ABE09714.1"/>
    <property type="molecule type" value="Genomic_DNA"/>
</dbReference>
<dbReference type="RefSeq" id="WP_001176745.1">
    <property type="nucleotide sequence ID" value="NZ_CP064825.1"/>
</dbReference>
<dbReference type="SMR" id="Q1R4K0"/>
<dbReference type="GeneID" id="93778233"/>
<dbReference type="KEGG" id="eci:UTI89_C4287"/>
<dbReference type="HOGENOM" id="CLU_010091_2_1_6"/>
<dbReference type="Proteomes" id="UP000001952">
    <property type="component" value="Chromosome"/>
</dbReference>
<dbReference type="GO" id="GO:0005886">
    <property type="term" value="C:plasma membrane"/>
    <property type="evidence" value="ECO:0007669"/>
    <property type="project" value="UniProtKB-SubCell"/>
</dbReference>
<dbReference type="GO" id="GO:0045259">
    <property type="term" value="C:proton-transporting ATP synthase complex"/>
    <property type="evidence" value="ECO:0007669"/>
    <property type="project" value="UniProtKB-KW"/>
</dbReference>
<dbReference type="GO" id="GO:0043531">
    <property type="term" value="F:ADP binding"/>
    <property type="evidence" value="ECO:0007669"/>
    <property type="project" value="TreeGrafter"/>
</dbReference>
<dbReference type="GO" id="GO:0005524">
    <property type="term" value="F:ATP binding"/>
    <property type="evidence" value="ECO:0007669"/>
    <property type="project" value="UniProtKB-UniRule"/>
</dbReference>
<dbReference type="GO" id="GO:0046933">
    <property type="term" value="F:proton-transporting ATP synthase activity, rotational mechanism"/>
    <property type="evidence" value="ECO:0007669"/>
    <property type="project" value="UniProtKB-UniRule"/>
</dbReference>
<dbReference type="CDD" id="cd18113">
    <property type="entry name" value="ATP-synt_F1_alpha_C"/>
    <property type="match status" value="1"/>
</dbReference>
<dbReference type="CDD" id="cd18116">
    <property type="entry name" value="ATP-synt_F1_alpha_N"/>
    <property type="match status" value="1"/>
</dbReference>
<dbReference type="CDD" id="cd01132">
    <property type="entry name" value="F1-ATPase_alpha_CD"/>
    <property type="match status" value="1"/>
</dbReference>
<dbReference type="FunFam" id="1.20.150.20:FF:000001">
    <property type="entry name" value="ATP synthase subunit alpha"/>
    <property type="match status" value="1"/>
</dbReference>
<dbReference type="FunFam" id="2.40.30.20:FF:000001">
    <property type="entry name" value="ATP synthase subunit alpha"/>
    <property type="match status" value="1"/>
</dbReference>
<dbReference type="FunFam" id="3.40.50.300:FF:000002">
    <property type="entry name" value="ATP synthase subunit alpha"/>
    <property type="match status" value="1"/>
</dbReference>
<dbReference type="Gene3D" id="2.40.30.20">
    <property type="match status" value="1"/>
</dbReference>
<dbReference type="Gene3D" id="1.20.150.20">
    <property type="entry name" value="ATP synthase alpha/beta chain, C-terminal domain"/>
    <property type="match status" value="1"/>
</dbReference>
<dbReference type="Gene3D" id="3.40.50.300">
    <property type="entry name" value="P-loop containing nucleotide triphosphate hydrolases"/>
    <property type="match status" value="1"/>
</dbReference>
<dbReference type="HAMAP" id="MF_01346">
    <property type="entry name" value="ATP_synth_alpha_bact"/>
    <property type="match status" value="1"/>
</dbReference>
<dbReference type="InterPro" id="IPR023366">
    <property type="entry name" value="ATP_synth_asu-like_sf"/>
</dbReference>
<dbReference type="InterPro" id="IPR000793">
    <property type="entry name" value="ATP_synth_asu_C"/>
</dbReference>
<dbReference type="InterPro" id="IPR038376">
    <property type="entry name" value="ATP_synth_asu_C_sf"/>
</dbReference>
<dbReference type="InterPro" id="IPR033732">
    <property type="entry name" value="ATP_synth_F1_a_nt-bd_dom"/>
</dbReference>
<dbReference type="InterPro" id="IPR005294">
    <property type="entry name" value="ATP_synth_F1_asu"/>
</dbReference>
<dbReference type="InterPro" id="IPR020003">
    <property type="entry name" value="ATPase_a/bsu_AS"/>
</dbReference>
<dbReference type="InterPro" id="IPR004100">
    <property type="entry name" value="ATPase_F1/V1/A1_a/bsu_N"/>
</dbReference>
<dbReference type="InterPro" id="IPR036121">
    <property type="entry name" value="ATPase_F1/V1/A1_a/bsu_N_sf"/>
</dbReference>
<dbReference type="InterPro" id="IPR000194">
    <property type="entry name" value="ATPase_F1/V1/A1_a/bsu_nucl-bd"/>
</dbReference>
<dbReference type="InterPro" id="IPR027417">
    <property type="entry name" value="P-loop_NTPase"/>
</dbReference>
<dbReference type="NCBIfam" id="TIGR00962">
    <property type="entry name" value="atpA"/>
    <property type="match status" value="1"/>
</dbReference>
<dbReference type="NCBIfam" id="NF009884">
    <property type="entry name" value="PRK13343.1"/>
    <property type="match status" value="1"/>
</dbReference>
<dbReference type="PANTHER" id="PTHR48082">
    <property type="entry name" value="ATP SYNTHASE SUBUNIT ALPHA, MITOCHONDRIAL"/>
    <property type="match status" value="1"/>
</dbReference>
<dbReference type="PANTHER" id="PTHR48082:SF2">
    <property type="entry name" value="ATP SYNTHASE SUBUNIT ALPHA, MITOCHONDRIAL"/>
    <property type="match status" value="1"/>
</dbReference>
<dbReference type="Pfam" id="PF00006">
    <property type="entry name" value="ATP-synt_ab"/>
    <property type="match status" value="1"/>
</dbReference>
<dbReference type="Pfam" id="PF00306">
    <property type="entry name" value="ATP-synt_ab_C"/>
    <property type="match status" value="1"/>
</dbReference>
<dbReference type="Pfam" id="PF02874">
    <property type="entry name" value="ATP-synt_ab_N"/>
    <property type="match status" value="1"/>
</dbReference>
<dbReference type="SUPFAM" id="SSF47917">
    <property type="entry name" value="C-terminal domain of alpha and beta subunits of F1 ATP synthase"/>
    <property type="match status" value="1"/>
</dbReference>
<dbReference type="SUPFAM" id="SSF50615">
    <property type="entry name" value="N-terminal domain of alpha and beta subunits of F1 ATP synthase"/>
    <property type="match status" value="1"/>
</dbReference>
<dbReference type="SUPFAM" id="SSF52540">
    <property type="entry name" value="P-loop containing nucleoside triphosphate hydrolases"/>
    <property type="match status" value="1"/>
</dbReference>
<dbReference type="PROSITE" id="PS00152">
    <property type="entry name" value="ATPASE_ALPHA_BETA"/>
    <property type="match status" value="1"/>
</dbReference>
<protein>
    <recommendedName>
        <fullName evidence="1">ATP synthase subunit alpha</fullName>
        <ecNumber evidence="1">7.1.2.2</ecNumber>
    </recommendedName>
    <alternativeName>
        <fullName evidence="1">ATP synthase F1 sector subunit alpha</fullName>
    </alternativeName>
    <alternativeName>
        <fullName evidence="1">F-ATPase subunit alpha</fullName>
    </alternativeName>
</protein>
<comment type="function">
    <text evidence="1">Produces ATP from ADP in the presence of a proton gradient across the membrane. The alpha chain is a regulatory subunit.</text>
</comment>
<comment type="catalytic activity">
    <reaction evidence="1">
        <text>ATP + H2O + 4 H(+)(in) = ADP + phosphate + 5 H(+)(out)</text>
        <dbReference type="Rhea" id="RHEA:57720"/>
        <dbReference type="ChEBI" id="CHEBI:15377"/>
        <dbReference type="ChEBI" id="CHEBI:15378"/>
        <dbReference type="ChEBI" id="CHEBI:30616"/>
        <dbReference type="ChEBI" id="CHEBI:43474"/>
        <dbReference type="ChEBI" id="CHEBI:456216"/>
        <dbReference type="EC" id="7.1.2.2"/>
    </reaction>
</comment>
<comment type="subunit">
    <text evidence="1">F-type ATPases have 2 components, CF(1) - the catalytic core - and CF(0) - the membrane proton channel. CF(1) has five subunits: alpha(3), beta(3), gamma(1), delta(1), epsilon(1). CF(0) has three main subunits: a(1), b(2) and c(9-12). The alpha and beta chains form an alternating ring which encloses part of the gamma chain. CF(1) is attached to CF(0) by a central stalk formed by the gamma and epsilon chains, while a peripheral stalk is formed by the delta and b chains.</text>
</comment>
<comment type="subcellular location">
    <subcellularLocation>
        <location evidence="1">Cell inner membrane</location>
        <topology evidence="1">Peripheral membrane protein</topology>
    </subcellularLocation>
</comment>
<comment type="similarity">
    <text evidence="1">Belongs to the ATPase alpha/beta chains family.</text>
</comment>
<keyword id="KW-0066">ATP synthesis</keyword>
<keyword id="KW-0067">ATP-binding</keyword>
<keyword id="KW-0997">Cell inner membrane</keyword>
<keyword id="KW-1003">Cell membrane</keyword>
<keyword id="KW-0139">CF(1)</keyword>
<keyword id="KW-0375">Hydrogen ion transport</keyword>
<keyword id="KW-0406">Ion transport</keyword>
<keyword id="KW-0472">Membrane</keyword>
<keyword id="KW-0547">Nucleotide-binding</keyword>
<keyword id="KW-1278">Translocase</keyword>
<keyword id="KW-0813">Transport</keyword>
<evidence type="ECO:0000255" key="1">
    <source>
        <dbReference type="HAMAP-Rule" id="MF_01346"/>
    </source>
</evidence>
<feature type="chain" id="PRO_0000256088" description="ATP synthase subunit alpha">
    <location>
        <begin position="1"/>
        <end position="513"/>
    </location>
</feature>
<feature type="binding site" evidence="1">
    <location>
        <begin position="169"/>
        <end position="176"/>
    </location>
    <ligand>
        <name>ATP</name>
        <dbReference type="ChEBI" id="CHEBI:30616"/>
    </ligand>
</feature>
<feature type="site" description="Required for activity" evidence="1">
    <location>
        <position position="373"/>
    </location>
</feature>
<sequence>MQLNSTEISELIKQRIAQFNVVSEAHNEGTIVSVSDGVIRIHGLADCMQGEMISLPGNRYAIALNLERDSVGAVVMGPYADLAEGMKVKCTGRILEVPVGRGLLGRVVNTLGAPIDGKGPLDHDGFSAVEAIAPGVIERQSVDQPVQTGYKAVDSMIPIGRGQRELIIGDRQTGKTALAIDAIINQRDSGIKCIYVAIGQKASTISNVVRKLEEHGALANTIVVVATASESAALQYLAPYAGCAMGEYFRDRGEDALIIYDDLSKQAVAYRQISLLLRRPPGREAFPGDVFYLHSRLLERAARVNAEYVEAFTKGEVKGKTGSLTALPIIETQAGDVSAFVPTNVISITDGQIFLETNLFNAGIRPAVNPGISVSRVGGAAQTKIMKKLSGGIRTALAQYRELAAFSQFASDLDDATRKQLDHGQKVTELLKQKQYAPMSVAQQSLVLFAAERGYLADVELSKIGSFEAALLAYVDRDHAPLMQEINQTGGYNDEIEGKLKGILDSFKATQSW</sequence>
<reference key="1">
    <citation type="journal article" date="2006" name="Proc. Natl. Acad. Sci. U.S.A.">
        <title>Identification of genes subject to positive selection in uropathogenic strains of Escherichia coli: a comparative genomics approach.</title>
        <authorList>
            <person name="Chen S.L."/>
            <person name="Hung C.-S."/>
            <person name="Xu J."/>
            <person name="Reigstad C.S."/>
            <person name="Magrini V."/>
            <person name="Sabo A."/>
            <person name="Blasiar D."/>
            <person name="Bieri T."/>
            <person name="Meyer R.R."/>
            <person name="Ozersky P."/>
            <person name="Armstrong J.R."/>
            <person name="Fulton R.S."/>
            <person name="Latreille J.P."/>
            <person name="Spieth J."/>
            <person name="Hooton T.M."/>
            <person name="Mardis E.R."/>
            <person name="Hultgren S.J."/>
            <person name="Gordon J.I."/>
        </authorList>
    </citation>
    <scope>NUCLEOTIDE SEQUENCE [LARGE SCALE GENOMIC DNA]</scope>
    <source>
        <strain>UTI89 / UPEC</strain>
    </source>
</reference>
<proteinExistence type="inferred from homology"/>
<gene>
    <name evidence="1" type="primary">atpA</name>
    <name type="ordered locus">UTI89_C4287</name>
</gene>
<accession>Q1R4K0</accession>
<organism>
    <name type="scientific">Escherichia coli (strain UTI89 / UPEC)</name>
    <dbReference type="NCBI Taxonomy" id="364106"/>
    <lineage>
        <taxon>Bacteria</taxon>
        <taxon>Pseudomonadati</taxon>
        <taxon>Pseudomonadota</taxon>
        <taxon>Gammaproteobacteria</taxon>
        <taxon>Enterobacterales</taxon>
        <taxon>Enterobacteriaceae</taxon>
        <taxon>Escherichia</taxon>
    </lineage>
</organism>
<name>ATPA_ECOUT</name>